<organism>
    <name type="scientific">Staphylococcus aureus (strain JH1)</name>
    <dbReference type="NCBI Taxonomy" id="359787"/>
    <lineage>
        <taxon>Bacteria</taxon>
        <taxon>Bacillati</taxon>
        <taxon>Bacillota</taxon>
        <taxon>Bacilli</taxon>
        <taxon>Bacillales</taxon>
        <taxon>Staphylococcaceae</taxon>
        <taxon>Staphylococcus</taxon>
    </lineage>
</organism>
<dbReference type="EC" id="2.7.7.3" evidence="1"/>
<dbReference type="EMBL" id="CP000736">
    <property type="protein sequence ID" value="ABR52060.1"/>
    <property type="molecule type" value="Genomic_DNA"/>
</dbReference>
<dbReference type="SMR" id="A6U0U2"/>
<dbReference type="KEGG" id="sah:SaurJH1_1206"/>
<dbReference type="HOGENOM" id="CLU_100149_0_1_9"/>
<dbReference type="UniPathway" id="UPA00241">
    <property type="reaction ID" value="UER00355"/>
</dbReference>
<dbReference type="GO" id="GO:0005737">
    <property type="term" value="C:cytoplasm"/>
    <property type="evidence" value="ECO:0007669"/>
    <property type="project" value="UniProtKB-SubCell"/>
</dbReference>
<dbReference type="GO" id="GO:0005524">
    <property type="term" value="F:ATP binding"/>
    <property type="evidence" value="ECO:0007669"/>
    <property type="project" value="UniProtKB-KW"/>
</dbReference>
<dbReference type="GO" id="GO:0004595">
    <property type="term" value="F:pantetheine-phosphate adenylyltransferase activity"/>
    <property type="evidence" value="ECO:0007669"/>
    <property type="project" value="UniProtKB-UniRule"/>
</dbReference>
<dbReference type="GO" id="GO:0015937">
    <property type="term" value="P:coenzyme A biosynthetic process"/>
    <property type="evidence" value="ECO:0007669"/>
    <property type="project" value="UniProtKB-UniRule"/>
</dbReference>
<dbReference type="CDD" id="cd02163">
    <property type="entry name" value="PPAT"/>
    <property type="match status" value="1"/>
</dbReference>
<dbReference type="Gene3D" id="3.40.50.620">
    <property type="entry name" value="HUPs"/>
    <property type="match status" value="1"/>
</dbReference>
<dbReference type="HAMAP" id="MF_00151">
    <property type="entry name" value="PPAT_bact"/>
    <property type="match status" value="1"/>
</dbReference>
<dbReference type="InterPro" id="IPR004821">
    <property type="entry name" value="Cyt_trans-like"/>
</dbReference>
<dbReference type="InterPro" id="IPR001980">
    <property type="entry name" value="PPAT"/>
</dbReference>
<dbReference type="InterPro" id="IPR014729">
    <property type="entry name" value="Rossmann-like_a/b/a_fold"/>
</dbReference>
<dbReference type="NCBIfam" id="TIGR01510">
    <property type="entry name" value="coaD_prev_kdtB"/>
    <property type="match status" value="1"/>
</dbReference>
<dbReference type="NCBIfam" id="TIGR00125">
    <property type="entry name" value="cyt_tran_rel"/>
    <property type="match status" value="1"/>
</dbReference>
<dbReference type="PANTHER" id="PTHR21342">
    <property type="entry name" value="PHOSPHOPANTETHEINE ADENYLYLTRANSFERASE"/>
    <property type="match status" value="1"/>
</dbReference>
<dbReference type="PANTHER" id="PTHR21342:SF1">
    <property type="entry name" value="PHOSPHOPANTETHEINE ADENYLYLTRANSFERASE"/>
    <property type="match status" value="1"/>
</dbReference>
<dbReference type="Pfam" id="PF01467">
    <property type="entry name" value="CTP_transf_like"/>
    <property type="match status" value="1"/>
</dbReference>
<dbReference type="PRINTS" id="PR01020">
    <property type="entry name" value="LPSBIOSNTHSS"/>
</dbReference>
<dbReference type="SUPFAM" id="SSF52374">
    <property type="entry name" value="Nucleotidylyl transferase"/>
    <property type="match status" value="1"/>
</dbReference>
<keyword id="KW-0067">ATP-binding</keyword>
<keyword id="KW-0173">Coenzyme A biosynthesis</keyword>
<keyword id="KW-0963">Cytoplasm</keyword>
<keyword id="KW-0460">Magnesium</keyword>
<keyword id="KW-0547">Nucleotide-binding</keyword>
<keyword id="KW-0548">Nucleotidyltransferase</keyword>
<keyword id="KW-0808">Transferase</keyword>
<evidence type="ECO:0000255" key="1">
    <source>
        <dbReference type="HAMAP-Rule" id="MF_00151"/>
    </source>
</evidence>
<sequence length="160" mass="18371">MEHTIAVIPGSFDPITYGHLDIIERSTDRFDEIHVCVLKNSKKEGTFSLEERMDLIEQSVKHLPNVKVHQFSGLLVDYCEQVGAKTIIRGLRAVSDFEYELRLTSMNKKLNNEIETLYMMSSTNYSFISSSIVKEVAAYRADISEFVPPYVEKALKKKFK</sequence>
<name>COAD_STAA2</name>
<protein>
    <recommendedName>
        <fullName evidence="1">Phosphopantetheine adenylyltransferase</fullName>
        <ecNumber evidence="1">2.7.7.3</ecNumber>
    </recommendedName>
    <alternativeName>
        <fullName evidence="1">Dephospho-CoA pyrophosphorylase</fullName>
    </alternativeName>
    <alternativeName>
        <fullName evidence="1">Pantetheine-phosphate adenylyltransferase</fullName>
        <shortName evidence="1">PPAT</shortName>
    </alternativeName>
</protein>
<accession>A6U0U2</accession>
<gene>
    <name evidence="1" type="primary">coaD</name>
    <name type="ordered locus">SaurJH1_1206</name>
</gene>
<comment type="function">
    <text evidence="1">Reversibly transfers an adenylyl group from ATP to 4'-phosphopantetheine, yielding dephospho-CoA (dPCoA) and pyrophosphate.</text>
</comment>
<comment type="catalytic activity">
    <reaction evidence="1">
        <text>(R)-4'-phosphopantetheine + ATP + H(+) = 3'-dephospho-CoA + diphosphate</text>
        <dbReference type="Rhea" id="RHEA:19801"/>
        <dbReference type="ChEBI" id="CHEBI:15378"/>
        <dbReference type="ChEBI" id="CHEBI:30616"/>
        <dbReference type="ChEBI" id="CHEBI:33019"/>
        <dbReference type="ChEBI" id="CHEBI:57328"/>
        <dbReference type="ChEBI" id="CHEBI:61723"/>
        <dbReference type="EC" id="2.7.7.3"/>
    </reaction>
</comment>
<comment type="cofactor">
    <cofactor evidence="1">
        <name>Mg(2+)</name>
        <dbReference type="ChEBI" id="CHEBI:18420"/>
    </cofactor>
</comment>
<comment type="pathway">
    <text evidence="1">Cofactor biosynthesis; coenzyme A biosynthesis; CoA from (R)-pantothenate: step 4/5.</text>
</comment>
<comment type="subunit">
    <text evidence="1">Homohexamer.</text>
</comment>
<comment type="subcellular location">
    <subcellularLocation>
        <location evidence="1">Cytoplasm</location>
    </subcellularLocation>
</comment>
<comment type="similarity">
    <text evidence="1">Belongs to the bacterial CoaD family.</text>
</comment>
<reference key="1">
    <citation type="submission" date="2007-06" db="EMBL/GenBank/DDBJ databases">
        <title>Complete sequence of chromosome of Staphylococcus aureus subsp. aureus JH1.</title>
        <authorList>
            <consortium name="US DOE Joint Genome Institute"/>
            <person name="Copeland A."/>
            <person name="Lucas S."/>
            <person name="Lapidus A."/>
            <person name="Barry K."/>
            <person name="Detter J.C."/>
            <person name="Glavina del Rio T."/>
            <person name="Hammon N."/>
            <person name="Israni S."/>
            <person name="Dalin E."/>
            <person name="Tice H."/>
            <person name="Pitluck S."/>
            <person name="Chain P."/>
            <person name="Malfatti S."/>
            <person name="Shin M."/>
            <person name="Vergez L."/>
            <person name="Schmutz J."/>
            <person name="Larimer F."/>
            <person name="Land M."/>
            <person name="Hauser L."/>
            <person name="Kyrpides N."/>
            <person name="Ivanova N."/>
            <person name="Tomasz A."/>
            <person name="Richardson P."/>
        </authorList>
    </citation>
    <scope>NUCLEOTIDE SEQUENCE [LARGE SCALE GENOMIC DNA]</scope>
    <source>
        <strain>JH1</strain>
    </source>
</reference>
<feature type="chain" id="PRO_1000076794" description="Phosphopantetheine adenylyltransferase">
    <location>
        <begin position="1"/>
        <end position="160"/>
    </location>
</feature>
<feature type="binding site" evidence="1">
    <location>
        <begin position="11"/>
        <end position="12"/>
    </location>
    <ligand>
        <name>ATP</name>
        <dbReference type="ChEBI" id="CHEBI:30616"/>
    </ligand>
</feature>
<feature type="binding site" evidence="1">
    <location>
        <position position="11"/>
    </location>
    <ligand>
        <name>substrate</name>
    </ligand>
</feature>
<feature type="binding site" evidence="1">
    <location>
        <position position="19"/>
    </location>
    <ligand>
        <name>ATP</name>
        <dbReference type="ChEBI" id="CHEBI:30616"/>
    </ligand>
</feature>
<feature type="binding site" evidence="1">
    <location>
        <position position="43"/>
    </location>
    <ligand>
        <name>substrate</name>
    </ligand>
</feature>
<feature type="binding site" evidence="1">
    <location>
        <position position="75"/>
    </location>
    <ligand>
        <name>substrate</name>
    </ligand>
</feature>
<feature type="binding site" evidence="1">
    <location>
        <position position="89"/>
    </location>
    <ligand>
        <name>substrate</name>
    </ligand>
</feature>
<feature type="binding site" evidence="1">
    <location>
        <begin position="90"/>
        <end position="92"/>
    </location>
    <ligand>
        <name>ATP</name>
        <dbReference type="ChEBI" id="CHEBI:30616"/>
    </ligand>
</feature>
<feature type="binding site" evidence="1">
    <location>
        <position position="100"/>
    </location>
    <ligand>
        <name>ATP</name>
        <dbReference type="ChEBI" id="CHEBI:30616"/>
    </ligand>
</feature>
<feature type="binding site" evidence="1">
    <location>
        <begin position="125"/>
        <end position="131"/>
    </location>
    <ligand>
        <name>ATP</name>
        <dbReference type="ChEBI" id="CHEBI:30616"/>
    </ligand>
</feature>
<feature type="site" description="Transition state stabilizer" evidence="1">
    <location>
        <position position="19"/>
    </location>
</feature>
<proteinExistence type="inferred from homology"/>